<reference key="1">
    <citation type="submission" date="2007-08" db="EMBL/GenBank/DDBJ databases">
        <authorList>
            <consortium name="NIH - Mammalian Gene Collection (MGC) project"/>
        </authorList>
    </citation>
    <scope>NUCLEOTIDE SEQUENCE [LARGE SCALE MRNA]</scope>
    <source>
        <strain>Hereford</strain>
        <tissue>Fetal skin</tissue>
    </source>
</reference>
<sequence length="1413" mass="152380">MELMFAEWEDGERFSFEDSDRFEEDSLCSFISEAESLCQNWRGWRKQSAGPNSPTGGGGGGGSGGTRMRDGLVIPLVELSAKQVAFHIPFEVVEKVYPPVPEQLQLRIAFWSFPENEEDIRLYSCLANGSADEFQRGDQLFRMRAVKDPLQIGFHLSATVVPPQMVPPKGAYNVAVMFDRCRVTSCSCTCGAGAKWCTHVVALCLFRIHNASAVCLRAPVSESLSRLQRDQLQKFAQYLISELPQQILPTAQRLLDELLSSQSTAINTVCGAPDPTAGPSASDQSTWYLDESTLTDNIKKTLHKFCGPSPVVFSDVNSMYLSSTEPPAAAEWACLLRPLRGREPEGVWNLLSIVREMFKRRDSNAAPLLEILTVELAQDLLANPPDLKVEPPPAKGKKNKVSTSRQTWVATNTLTKAAFLLTVLSERPEHHNLAFRVGMFALELQRPPASTKALEVKLAYQESEVATLLKKIPLGPSEMSTVRCRAEELREGTLCDYRPVLPLMLASFIFDVLCAPVVSPTGSRPPSRNWNNEMPGDEELGFEAAVAALGMKTTVSEAEHPLLCEGTRREKGDLALALMITYKDDQARLKKILDKLLDRESQTHKPQTLSSFYSSSRPATASQRSPSKHGGPSAPGALQPLTSGSAGPAQPGSVAGAGPGPTEGFTEKNVPESSPHSPCEGLPPEAALTPRPEGKVPSRLALGSRGGYNGRGWGSPGRPKKKHTGMASIDSSAPETTSDSSPTLSRRPLRGGWAPTSWGRGQDSDSISSSSSDSLGSSSSSGSRRASASGGARAKTVEVGRYKGRRPESHAPHVPNQPSEAAAHFYFELAKTVLIKAGGNSSTSIFTHPSSSGGHQGPHRNLHLCAFEIGLYALGLHNFVSPNWLSRTYSSHVSWITGQAMEIGSAALTILVECWDGHLTPPEVASLADRASRARDSNMVRAAAELALSCLPHAHALNPNEIQRALVQCKEQDNLMLEKACMAVEEAAKGGGVYPEVLFEVAHQWFWLYEQTAGGSSTAREGATSCSASGIRAAGEAGRGLPEGRGGPGTEPVTVAAAAVTAATVVPVISVGSSLYPGPGLGHGHSPGLHPYTALQPHLPCSPQYLTHPAHPAHPMPHMPRPAVFPVASSAYPQGVHPAFLGAQYPYSVTPPSLAATAVSFPVPSMAPITVHPYHTEPGLPLPTSVALSSVHPASTFPAIQGASLPALTTQPSPLVSGGFPPPEEETHSQPVNPHSLHHLHAAYRVGMLALEMLGRRAHNDHPNNFSRSPPYTDDVKWLLGLAAKLGVNYVHQFCVGAAKGVLSPFVLQEIVMETLQRLSPAHAHNHLRAPAFHQLVQRCQQAYMQYIHHRLIHLTPADYDDFVNAIRSARSAFCLTPMGMMQFNDILQNLKRSKQTKELWQRVSLEMTTFSP</sequence>
<gene>
    <name evidence="1" type="primary">ZSWIM8</name>
</gene>
<name>ZSWM8_BOVIN</name>
<keyword id="KW-0963">Cytoplasm</keyword>
<keyword id="KW-0479">Metal-binding</keyword>
<keyword id="KW-0597">Phosphoprotein</keyword>
<keyword id="KW-1185">Reference proteome</keyword>
<keyword id="KW-0833">Ubl conjugation pathway</keyword>
<keyword id="KW-0862">Zinc</keyword>
<keyword id="KW-0863">Zinc-finger</keyword>
<protein>
    <recommendedName>
        <fullName evidence="5">Zinc finger SWIM domain-containing protein 8</fullName>
    </recommendedName>
</protein>
<comment type="function">
    <text evidence="1 2">Substrate recognition component of a SCF-like E3 ubiquitin-protein ligase complex that promotes target-directed microRNA degradation (TDMD), a process that mediates degradation of microRNAs (miRNAs) (By similarity). The SCF-like E3 ubiquitin-protein ligase complex acts by catalyzing ubiquitination and subsequent degradation of AGO proteins (AGO1, AGO2, AGO3 and/or AGO4), thereby exposing miRNAs for degradation (By similarity). Specifically recognizes and binds AGO proteins when they are engaged with a TDMD target (By similarity). May also acts as a regulator of axon guidance: specifically recognizes misfolded ROBO3 and promotes its ubiquitination and subsequent degradation (By similarity). Plays an essential role for proper embryonic development of heart and lung. Controls protein quality of DAB1, a key signal molecule for brain development, thus protecting its signaling strength. Mechanistically, recognizes intrinsically disordered regions of DAB1 and eliminates misfolded DAB1 that cannot be properly phosphorylated (By similarity).</text>
</comment>
<comment type="pathway">
    <text evidence="1">Protein modification; protein ubiquitination.</text>
</comment>
<comment type="subunit">
    <text evidence="2">Component of the SCF-like E3 ubiquitin-protein ligase complex which contains CUL3, RBX1, ELOB, ELOC and ZSWIM8. Interacts with DAB1.</text>
</comment>
<comment type="subcellular location">
    <subcellularLocation>
        <location evidence="2">Cytoplasm</location>
        <location evidence="2">Cytosol</location>
    </subcellularLocation>
    <text evidence="2">Translocates together with its substrate into stress granules (SGs) under proteostatic stress.</text>
</comment>
<comment type="similarity">
    <text evidence="5">Belongs to the ZSWIM8 family.</text>
</comment>
<accession>A7E305</accession>
<organism>
    <name type="scientific">Bos taurus</name>
    <name type="common">Bovine</name>
    <dbReference type="NCBI Taxonomy" id="9913"/>
    <lineage>
        <taxon>Eukaryota</taxon>
        <taxon>Metazoa</taxon>
        <taxon>Chordata</taxon>
        <taxon>Craniata</taxon>
        <taxon>Vertebrata</taxon>
        <taxon>Euteleostomi</taxon>
        <taxon>Mammalia</taxon>
        <taxon>Eutheria</taxon>
        <taxon>Laurasiatheria</taxon>
        <taxon>Artiodactyla</taxon>
        <taxon>Ruminantia</taxon>
        <taxon>Pecora</taxon>
        <taxon>Bovidae</taxon>
        <taxon>Bovinae</taxon>
        <taxon>Bos</taxon>
    </lineage>
</organism>
<feature type="chain" id="PRO_0000311801" description="Zinc finger SWIM domain-containing protein 8">
    <location>
        <begin position="1"/>
        <end position="1413"/>
    </location>
</feature>
<feature type="zinc finger region" description="SWIM-type" evidence="3">
    <location>
        <begin position="172"/>
        <end position="208"/>
    </location>
</feature>
<feature type="region of interest" description="Disordered" evidence="4">
    <location>
        <begin position="45"/>
        <end position="65"/>
    </location>
</feature>
<feature type="region of interest" description="Disordered" evidence="4">
    <location>
        <begin position="600"/>
        <end position="817"/>
    </location>
</feature>
<feature type="compositionally biased region" description="Gly residues" evidence="4">
    <location>
        <begin position="55"/>
        <end position="65"/>
    </location>
</feature>
<feature type="compositionally biased region" description="Polar residues" evidence="4">
    <location>
        <begin position="604"/>
        <end position="625"/>
    </location>
</feature>
<feature type="compositionally biased region" description="Gly residues" evidence="4">
    <location>
        <begin position="704"/>
        <end position="715"/>
    </location>
</feature>
<feature type="compositionally biased region" description="Polar residues" evidence="4">
    <location>
        <begin position="729"/>
        <end position="744"/>
    </location>
</feature>
<feature type="compositionally biased region" description="Low complexity" evidence="4">
    <location>
        <begin position="759"/>
        <end position="794"/>
    </location>
</feature>
<feature type="compositionally biased region" description="Basic and acidic residues" evidence="4">
    <location>
        <begin position="795"/>
        <end position="811"/>
    </location>
</feature>
<feature type="modified residue" description="Phosphoserine" evidence="1">
    <location>
        <position position="36"/>
    </location>
</feature>
<feature type="modified residue" description="Phosphoserine" evidence="1">
    <location>
        <position position="48"/>
    </location>
</feature>
<feature type="modified residue" description="Phosphoserine" evidence="2">
    <location>
        <position position="53"/>
    </location>
</feature>
<feature type="modified residue" description="Phosphothreonine" evidence="1">
    <location>
        <position position="724"/>
    </location>
</feature>
<feature type="modified residue" description="Phosphoserine" evidence="2">
    <location>
        <position position="738"/>
    </location>
</feature>
<feature type="modified residue" description="Phosphoserine" evidence="2">
    <location>
        <position position="741"/>
    </location>
</feature>
<feature type="modified residue" description="Phosphoserine" evidence="1">
    <location>
        <position position="745"/>
    </location>
</feature>
<feature type="modified residue" description="Phosphoserine" evidence="1">
    <location>
        <position position="852"/>
    </location>
</feature>
<feature type="modified residue" description="Phosphoserine" evidence="1">
    <location>
        <position position="1412"/>
    </location>
</feature>
<evidence type="ECO:0000250" key="1">
    <source>
        <dbReference type="UniProtKB" id="A7E2V4"/>
    </source>
</evidence>
<evidence type="ECO:0000250" key="2">
    <source>
        <dbReference type="UniProtKB" id="Q3UHH1"/>
    </source>
</evidence>
<evidence type="ECO:0000255" key="3">
    <source>
        <dbReference type="PROSITE-ProRule" id="PRU00325"/>
    </source>
</evidence>
<evidence type="ECO:0000256" key="4">
    <source>
        <dbReference type="SAM" id="MobiDB-lite"/>
    </source>
</evidence>
<evidence type="ECO:0000305" key="5"/>
<dbReference type="EMBL" id="BC151646">
    <property type="protein sequence ID" value="AAI51647.1"/>
    <property type="molecule type" value="mRNA"/>
</dbReference>
<dbReference type="RefSeq" id="NP_001095619.1">
    <property type="nucleotide sequence ID" value="NM_001102149.1"/>
</dbReference>
<dbReference type="SMR" id="A7E305"/>
<dbReference type="FunCoup" id="A7E305">
    <property type="interactions" value="103"/>
</dbReference>
<dbReference type="STRING" id="9913.ENSBTAP00000016807"/>
<dbReference type="eggNOG" id="KOG3615">
    <property type="taxonomic scope" value="Eukaryota"/>
</dbReference>
<dbReference type="HOGENOM" id="CLU_001052_0_0_1"/>
<dbReference type="InParanoid" id="A7E305"/>
<dbReference type="OrthoDB" id="10013584at2759"/>
<dbReference type="UniPathway" id="UPA00143"/>
<dbReference type="Proteomes" id="UP000009136">
    <property type="component" value="Unplaced"/>
</dbReference>
<dbReference type="GO" id="GO:0031462">
    <property type="term" value="C:Cul2-RING ubiquitin ligase complex"/>
    <property type="evidence" value="ECO:0000318"/>
    <property type="project" value="GO_Central"/>
</dbReference>
<dbReference type="GO" id="GO:0031463">
    <property type="term" value="C:Cul3-RING ubiquitin ligase complex"/>
    <property type="evidence" value="ECO:0000250"/>
    <property type="project" value="UniProtKB"/>
</dbReference>
<dbReference type="GO" id="GO:0005829">
    <property type="term" value="C:cytosol"/>
    <property type="evidence" value="ECO:0000250"/>
    <property type="project" value="UniProtKB"/>
</dbReference>
<dbReference type="GO" id="GO:1990756">
    <property type="term" value="F:ubiquitin-like ligase-substrate adaptor activity"/>
    <property type="evidence" value="ECO:0000250"/>
    <property type="project" value="UniProtKB"/>
</dbReference>
<dbReference type="GO" id="GO:0008270">
    <property type="term" value="F:zinc ion binding"/>
    <property type="evidence" value="ECO:0007669"/>
    <property type="project" value="UniProtKB-KW"/>
</dbReference>
<dbReference type="GO" id="GO:2000627">
    <property type="term" value="P:positive regulation of miRNA catabolic process"/>
    <property type="evidence" value="ECO:0000250"/>
    <property type="project" value="UniProtKB"/>
</dbReference>
<dbReference type="GO" id="GO:0043161">
    <property type="term" value="P:proteasome-mediated ubiquitin-dependent protein catabolic process"/>
    <property type="evidence" value="ECO:0000250"/>
    <property type="project" value="UniProtKB"/>
</dbReference>
<dbReference type="GO" id="GO:0016567">
    <property type="term" value="P:protein ubiquitination"/>
    <property type="evidence" value="ECO:0000250"/>
    <property type="project" value="UniProtKB"/>
</dbReference>
<dbReference type="InterPro" id="IPR007527">
    <property type="entry name" value="Znf_SWIM"/>
</dbReference>
<dbReference type="InterPro" id="IPR048370">
    <property type="entry name" value="ZSWIM4-8_C"/>
</dbReference>
<dbReference type="PANTHER" id="PTHR22619">
    <property type="entry name" value="ZINC FINGER SWIM DOMAIN CONTAINING PROTEIN 4, 5, 6"/>
    <property type="match status" value="1"/>
</dbReference>
<dbReference type="PANTHER" id="PTHR22619:SF1">
    <property type="entry name" value="ZINC FINGER SWIM DOMAIN-CONTAINING PROTEIN 8"/>
    <property type="match status" value="1"/>
</dbReference>
<dbReference type="Pfam" id="PF21055">
    <property type="entry name" value="ZSWIM4-8_C"/>
    <property type="match status" value="1"/>
</dbReference>
<dbReference type="PROSITE" id="PS50966">
    <property type="entry name" value="ZF_SWIM"/>
    <property type="match status" value="1"/>
</dbReference>
<proteinExistence type="evidence at transcript level"/>